<gene>
    <name evidence="2" type="primary">tuf</name>
    <name type="ordered locus">KRH_06140</name>
</gene>
<organism>
    <name type="scientific">Kocuria rhizophila (strain ATCC 9341 / DSM 348 / NBRC 103217 / DC2201)</name>
    <dbReference type="NCBI Taxonomy" id="378753"/>
    <lineage>
        <taxon>Bacteria</taxon>
        <taxon>Bacillati</taxon>
        <taxon>Actinomycetota</taxon>
        <taxon>Actinomycetes</taxon>
        <taxon>Micrococcales</taxon>
        <taxon>Micrococcaceae</taxon>
        <taxon>Kocuria</taxon>
    </lineage>
</organism>
<dbReference type="EC" id="3.6.5.3" evidence="2"/>
<dbReference type="EMBL" id="AP009152">
    <property type="protein sequence ID" value="BAG28961.1"/>
    <property type="molecule type" value="Genomic_DNA"/>
</dbReference>
<dbReference type="RefSeq" id="WP_012397687.1">
    <property type="nucleotide sequence ID" value="NZ_VECX01000001.1"/>
</dbReference>
<dbReference type="SMR" id="B2GIL2"/>
<dbReference type="STRING" id="378753.KRH_06140"/>
<dbReference type="KEGG" id="krh:KRH_06140"/>
<dbReference type="eggNOG" id="COG0050">
    <property type="taxonomic scope" value="Bacteria"/>
</dbReference>
<dbReference type="HOGENOM" id="CLU_007265_0_1_11"/>
<dbReference type="OrthoDB" id="9803139at2"/>
<dbReference type="Proteomes" id="UP000008838">
    <property type="component" value="Chromosome"/>
</dbReference>
<dbReference type="GO" id="GO:0005829">
    <property type="term" value="C:cytosol"/>
    <property type="evidence" value="ECO:0007669"/>
    <property type="project" value="TreeGrafter"/>
</dbReference>
<dbReference type="GO" id="GO:0005525">
    <property type="term" value="F:GTP binding"/>
    <property type="evidence" value="ECO:0007669"/>
    <property type="project" value="UniProtKB-UniRule"/>
</dbReference>
<dbReference type="GO" id="GO:0003924">
    <property type="term" value="F:GTPase activity"/>
    <property type="evidence" value="ECO:0007669"/>
    <property type="project" value="InterPro"/>
</dbReference>
<dbReference type="GO" id="GO:0003746">
    <property type="term" value="F:translation elongation factor activity"/>
    <property type="evidence" value="ECO:0007669"/>
    <property type="project" value="UniProtKB-UniRule"/>
</dbReference>
<dbReference type="CDD" id="cd01884">
    <property type="entry name" value="EF_Tu"/>
    <property type="match status" value="1"/>
</dbReference>
<dbReference type="CDD" id="cd03697">
    <property type="entry name" value="EFTU_II"/>
    <property type="match status" value="1"/>
</dbReference>
<dbReference type="CDD" id="cd03707">
    <property type="entry name" value="EFTU_III"/>
    <property type="match status" value="1"/>
</dbReference>
<dbReference type="FunFam" id="2.40.30.10:FF:000001">
    <property type="entry name" value="Elongation factor Tu"/>
    <property type="match status" value="1"/>
</dbReference>
<dbReference type="FunFam" id="3.40.50.300:FF:000003">
    <property type="entry name" value="Elongation factor Tu"/>
    <property type="match status" value="1"/>
</dbReference>
<dbReference type="Gene3D" id="3.40.50.300">
    <property type="entry name" value="P-loop containing nucleotide triphosphate hydrolases"/>
    <property type="match status" value="1"/>
</dbReference>
<dbReference type="Gene3D" id="2.40.30.10">
    <property type="entry name" value="Translation factors"/>
    <property type="match status" value="2"/>
</dbReference>
<dbReference type="HAMAP" id="MF_00118_B">
    <property type="entry name" value="EF_Tu_B"/>
    <property type="match status" value="1"/>
</dbReference>
<dbReference type="InterPro" id="IPR041709">
    <property type="entry name" value="EF-Tu_GTP-bd"/>
</dbReference>
<dbReference type="InterPro" id="IPR050055">
    <property type="entry name" value="EF-Tu_GTPase"/>
</dbReference>
<dbReference type="InterPro" id="IPR004161">
    <property type="entry name" value="EFTu-like_2"/>
</dbReference>
<dbReference type="InterPro" id="IPR033720">
    <property type="entry name" value="EFTU_2"/>
</dbReference>
<dbReference type="InterPro" id="IPR031157">
    <property type="entry name" value="G_TR_CS"/>
</dbReference>
<dbReference type="InterPro" id="IPR027417">
    <property type="entry name" value="P-loop_NTPase"/>
</dbReference>
<dbReference type="InterPro" id="IPR005225">
    <property type="entry name" value="Small_GTP-bd"/>
</dbReference>
<dbReference type="InterPro" id="IPR000795">
    <property type="entry name" value="T_Tr_GTP-bd_dom"/>
</dbReference>
<dbReference type="InterPro" id="IPR009000">
    <property type="entry name" value="Transl_B-barrel_sf"/>
</dbReference>
<dbReference type="InterPro" id="IPR009001">
    <property type="entry name" value="Transl_elong_EF1A/Init_IF2_C"/>
</dbReference>
<dbReference type="InterPro" id="IPR004541">
    <property type="entry name" value="Transl_elong_EFTu/EF1A_bac/org"/>
</dbReference>
<dbReference type="InterPro" id="IPR004160">
    <property type="entry name" value="Transl_elong_EFTu/EF1A_C"/>
</dbReference>
<dbReference type="NCBIfam" id="TIGR00485">
    <property type="entry name" value="EF-Tu"/>
    <property type="match status" value="1"/>
</dbReference>
<dbReference type="NCBIfam" id="NF000766">
    <property type="entry name" value="PRK00049.1"/>
    <property type="match status" value="1"/>
</dbReference>
<dbReference type="NCBIfam" id="NF009372">
    <property type="entry name" value="PRK12735.1"/>
    <property type="match status" value="1"/>
</dbReference>
<dbReference type="NCBIfam" id="NF009373">
    <property type="entry name" value="PRK12736.1"/>
    <property type="match status" value="1"/>
</dbReference>
<dbReference type="NCBIfam" id="TIGR00231">
    <property type="entry name" value="small_GTP"/>
    <property type="match status" value="1"/>
</dbReference>
<dbReference type="PANTHER" id="PTHR43721:SF22">
    <property type="entry name" value="ELONGATION FACTOR TU, MITOCHONDRIAL"/>
    <property type="match status" value="1"/>
</dbReference>
<dbReference type="PANTHER" id="PTHR43721">
    <property type="entry name" value="ELONGATION FACTOR TU-RELATED"/>
    <property type="match status" value="1"/>
</dbReference>
<dbReference type="Pfam" id="PF00009">
    <property type="entry name" value="GTP_EFTU"/>
    <property type="match status" value="1"/>
</dbReference>
<dbReference type="Pfam" id="PF03144">
    <property type="entry name" value="GTP_EFTU_D2"/>
    <property type="match status" value="1"/>
</dbReference>
<dbReference type="Pfam" id="PF03143">
    <property type="entry name" value="GTP_EFTU_D3"/>
    <property type="match status" value="1"/>
</dbReference>
<dbReference type="PRINTS" id="PR00315">
    <property type="entry name" value="ELONGATNFCT"/>
</dbReference>
<dbReference type="SUPFAM" id="SSF50465">
    <property type="entry name" value="EF-Tu/eEF-1alpha/eIF2-gamma C-terminal domain"/>
    <property type="match status" value="1"/>
</dbReference>
<dbReference type="SUPFAM" id="SSF52540">
    <property type="entry name" value="P-loop containing nucleoside triphosphate hydrolases"/>
    <property type="match status" value="1"/>
</dbReference>
<dbReference type="SUPFAM" id="SSF50447">
    <property type="entry name" value="Translation proteins"/>
    <property type="match status" value="1"/>
</dbReference>
<dbReference type="PROSITE" id="PS00301">
    <property type="entry name" value="G_TR_1"/>
    <property type="match status" value="1"/>
</dbReference>
<dbReference type="PROSITE" id="PS51722">
    <property type="entry name" value="G_TR_2"/>
    <property type="match status" value="1"/>
</dbReference>
<reference key="1">
    <citation type="journal article" date="2008" name="J. Bacteriol.">
        <title>Complete genome sequence of the soil actinomycete Kocuria rhizophila.</title>
        <authorList>
            <person name="Takarada H."/>
            <person name="Sekine M."/>
            <person name="Kosugi H."/>
            <person name="Matsuo Y."/>
            <person name="Fujisawa T."/>
            <person name="Omata S."/>
            <person name="Kishi E."/>
            <person name="Shimizu A."/>
            <person name="Tsukatani N."/>
            <person name="Tanikawa S."/>
            <person name="Fujita N."/>
            <person name="Harayama S."/>
        </authorList>
    </citation>
    <scope>NUCLEOTIDE SEQUENCE [LARGE SCALE GENOMIC DNA]</scope>
    <source>
        <strain>ATCC 9341 / DSM 348 / NBRC 103217 / DC2201</strain>
    </source>
</reference>
<accession>B2GIL2</accession>
<proteinExistence type="inferred from homology"/>
<protein>
    <recommendedName>
        <fullName evidence="2">Elongation factor Tu</fullName>
        <shortName evidence="2">EF-Tu</shortName>
        <ecNumber evidence="2">3.6.5.3</ecNumber>
    </recommendedName>
</protein>
<comment type="function">
    <text evidence="2">GTP hydrolase that promotes the GTP-dependent binding of aminoacyl-tRNA to the A-site of ribosomes during protein biosynthesis.</text>
</comment>
<comment type="catalytic activity">
    <reaction evidence="2">
        <text>GTP + H2O = GDP + phosphate + H(+)</text>
        <dbReference type="Rhea" id="RHEA:19669"/>
        <dbReference type="ChEBI" id="CHEBI:15377"/>
        <dbReference type="ChEBI" id="CHEBI:15378"/>
        <dbReference type="ChEBI" id="CHEBI:37565"/>
        <dbReference type="ChEBI" id="CHEBI:43474"/>
        <dbReference type="ChEBI" id="CHEBI:58189"/>
        <dbReference type="EC" id="3.6.5.3"/>
    </reaction>
    <physiologicalReaction direction="left-to-right" evidence="2">
        <dbReference type="Rhea" id="RHEA:19670"/>
    </physiologicalReaction>
</comment>
<comment type="subunit">
    <text evidence="2">Monomer.</text>
</comment>
<comment type="subcellular location">
    <subcellularLocation>
        <location evidence="2">Cytoplasm</location>
    </subcellularLocation>
</comment>
<comment type="similarity">
    <text evidence="2">Belongs to the TRAFAC class translation factor GTPase superfamily. Classic translation factor GTPase family. EF-Tu/EF-1A subfamily.</text>
</comment>
<evidence type="ECO:0000250" key="1"/>
<evidence type="ECO:0000255" key="2">
    <source>
        <dbReference type="HAMAP-Rule" id="MF_00118"/>
    </source>
</evidence>
<sequence>MAKAKFERNKPHLNIGTIGHVDHGKTTLTAAISKVLADKYPDVNEQRDFGAIDSAPEEKQRGITINIAHIEYQTDKRHYAHVDAPGHADYVKNMITGAAQMDGAILVVAATDGPMAQTREHVLLARQVGVPYLLVALNKSDMVDDEELLDLVEMEVRELLSDQGFDGDNAPVVRVSALKALEGDAQWVKSVEDLMEAVDENVPDPVRDTDKPFLMPIEDVFTITGRGTVVTGRAERGTLPINSEVEIVGIRPVQKTTVTGIEMFHKQMDEAMAGENCGLLLRGLKRDDVERGQVVCKPGSITPHTDFEANVYILSKEEGGRHNPFYSNYRPQFYFRTTDVTGVITLPEGTEMVMPGDNTEMTVELIQPIAMEEGLGFAIREGGRTVGSGRVTKIIK</sequence>
<feature type="chain" id="PRO_1000095068" description="Elongation factor Tu">
    <location>
        <begin position="1"/>
        <end position="396"/>
    </location>
</feature>
<feature type="domain" description="tr-type G">
    <location>
        <begin position="10"/>
        <end position="206"/>
    </location>
</feature>
<feature type="region of interest" description="G1" evidence="1">
    <location>
        <begin position="19"/>
        <end position="26"/>
    </location>
</feature>
<feature type="region of interest" description="G2" evidence="1">
    <location>
        <begin position="62"/>
        <end position="66"/>
    </location>
</feature>
<feature type="region of interest" description="G3" evidence="1">
    <location>
        <begin position="83"/>
        <end position="86"/>
    </location>
</feature>
<feature type="region of interest" description="G4" evidence="1">
    <location>
        <begin position="138"/>
        <end position="141"/>
    </location>
</feature>
<feature type="region of interest" description="G5" evidence="1">
    <location>
        <begin position="176"/>
        <end position="178"/>
    </location>
</feature>
<feature type="binding site" evidence="2">
    <location>
        <begin position="19"/>
        <end position="26"/>
    </location>
    <ligand>
        <name>GTP</name>
        <dbReference type="ChEBI" id="CHEBI:37565"/>
    </ligand>
</feature>
<feature type="binding site" evidence="2">
    <location>
        <position position="26"/>
    </location>
    <ligand>
        <name>Mg(2+)</name>
        <dbReference type="ChEBI" id="CHEBI:18420"/>
    </ligand>
</feature>
<feature type="binding site" evidence="2">
    <location>
        <begin position="83"/>
        <end position="87"/>
    </location>
    <ligand>
        <name>GTP</name>
        <dbReference type="ChEBI" id="CHEBI:37565"/>
    </ligand>
</feature>
<feature type="binding site" evidence="2">
    <location>
        <begin position="138"/>
        <end position="141"/>
    </location>
    <ligand>
        <name>GTP</name>
        <dbReference type="ChEBI" id="CHEBI:37565"/>
    </ligand>
</feature>
<keyword id="KW-0963">Cytoplasm</keyword>
<keyword id="KW-0251">Elongation factor</keyword>
<keyword id="KW-0342">GTP-binding</keyword>
<keyword id="KW-0378">Hydrolase</keyword>
<keyword id="KW-0460">Magnesium</keyword>
<keyword id="KW-0479">Metal-binding</keyword>
<keyword id="KW-0547">Nucleotide-binding</keyword>
<keyword id="KW-0648">Protein biosynthesis</keyword>
<keyword id="KW-1185">Reference proteome</keyword>
<name>EFTU_KOCRD</name>